<gene>
    <name evidence="1" type="primary">FBN1</name>
</gene>
<keyword id="KW-0106">Calcium</keyword>
<keyword id="KW-0903">Direct protein sequencing</keyword>
<keyword id="KW-1015">Disulfide bond</keyword>
<keyword id="KW-0245">EGF-like domain</keyword>
<keyword id="KW-0272">Extracellular matrix</keyword>
<keyword id="KW-0325">Glycoprotein</keyword>
<keyword id="KW-0372">Hormone</keyword>
<keyword id="KW-0597">Phosphoprotein</keyword>
<keyword id="KW-1185">Reference proteome</keyword>
<keyword id="KW-0677">Repeat</keyword>
<keyword id="KW-0964">Secreted</keyword>
<keyword id="KW-0732">Signal</keyword>
<proteinExistence type="evidence at protein level"/>
<comment type="function">
    <molecule>Fibrillin-1</molecule>
    <text evidence="1 2">Structural component of the 10-12 nm diameter microfibrils of the extracellular matrix, which conveys both structural and regulatory properties to load-bearing connective tissues. Fibrillin-1-containing microfibrils provide long-term force bearing structural support. In tissues such as the lung, blood vessels and skin, microfibrils form the periphery of the elastic fiber, acting as a scaffold for the deposition of elastin. In addition, microfibrils can occur as elastin-independent networks in tissues such as the ciliary zonule, tendon, cornea and glomerulus where they provide tensile strength and have anchoring roles. Fibrillin-1 also plays a key role in tissue homeostasis through specific interactions with growth factors, such as the bone morphogenetic proteins (BMPs), growth and differentiation factors (GDFs) and latent transforming growth factor-beta-binding proteins (LTBPs), cell-surface integrins and other extracellular matrix protein and proteoglycan components. Regulates osteoblast maturation by controlling TGF-beta bioavailability and calibrating TGF-beta and BMP levels, respectively. Negatively regulates osteoclastogenesis by binding and sequestering an osteoclast differentiation and activation factor TNFSF11. This leads to disruption of TNFSF11-induced Ca(2+) signaling and impairment of TNFSF11-mediated nuclear translocation and activation of transcription factor NFATC1 which regulates genes important for osteoclast differentiation and function. Mediates cell adhesion via its binding to cell surface receptors integrins ITGAV:ITGB3 and ITGA5:ITGB1. Binds heparin and this interaction plays an important role in the assembly of microfibrils.</text>
</comment>
<comment type="function">
    <molecule>Asprosin</molecule>
    <text evidence="1">Hormone that targets the liver to increase plasma glucose levels. Secreted by white adipose tissue and circulates in the plasma. Acts in response to fasting and promotes blood glucose elevation by binding to the surface of hepatocytes. Promotes hepatocyte glucose release by activating the protein kinase A activity in the liver, resulting in rapid glucose release into the circulation.</text>
</comment>
<comment type="subunit">
    <molecule>Fibrillin-1</molecule>
    <text evidence="1 2">Interacts with COL16A1. Interacts with integrin alpha-V/beta-3. Interacts with ADAMTS10; this interaction promotes microfibril assembly. Interacts with THSD4; this interaction promotes fibril formation. Interacts (via N-terminal domain) with FBLN2 and FBLN5. Interacts with ELN. Forms a ternary complex with ELN and FBLN2 or FBLN5 and a significant interaction with ELN seen only in the presence of FBLN2 or FBLN5. Interacts (via N-terminal domain) with LTBP2 (via C-terminal domain) in a Ca(+2)-dependent manner. Interacts (via N-terminal domain) with LTBP1 (via C-terminal domain). Interacts with integrins ITGA5:ITGB1, ITGAV:ITGB3 and ITGAV:ITGB6. Interacts (via N-terminal domain) with BMP2, BMP4, BMP7, BMP10 and GDF5. Interacts (via N-terminal domain) with MFAP2 and MFAP5. Interacts with ADAMTSL5. Interacts with MFAP4. Interacts (via N-terminal domain) with TNFSF11 in a Ca(+2)-dependent manner. Interacts (via N-terminal domain) with EFEMP2; this interaction inhibits EFEMP2 binding to LOX and ELN (By similarity).</text>
</comment>
<comment type="subcellular location">
    <subcellularLocation>
        <location evidence="1">Secreted</location>
    </subcellularLocation>
    <text evidence="1">Fibrillin-1 and Asprosin chains are still linked together during the secretion from cells, but are subsequently separated by furin.</text>
</comment>
<comment type="subcellular location">
    <molecule>Asprosin</molecule>
    <subcellularLocation>
        <location evidence="1">Secreted</location>
    </subcellularLocation>
    <text evidence="1">Secreted into the plasma.</text>
</comment>
<comment type="subcellular location">
    <molecule>Fibrillin-1</molecule>
    <subcellularLocation>
        <location evidence="1">Secreted</location>
        <location evidence="1">Extracellular space</location>
        <location evidence="1">Extracellular matrix</location>
    </subcellularLocation>
</comment>
<comment type="PTM">
    <text evidence="1">Cleavage of N- and C-terminus by furin is required for incorporation into the extracellular matrix and assembly into microfibrils. The C-terminus, which corresponds to the Asprosin chain, was initially thought to constitute a propeptide. Fibrillin-1 and Asprosin chains are still linked together during the secretion from cells, but are subsequently separated by furin, an essential step for incorporation of Fibrillin-1 into the nascent microfibrils.</text>
</comment>
<comment type="PTM">
    <molecule>Fibrillin-1</molecule>
    <text evidence="1">Forms intermolecular disulfide bonds either with other fibrillin-1 molecules or with other components of the microfibrils.</text>
</comment>
<comment type="PTM">
    <text evidence="1">O-glycosylated on serine residues by POGLUT2 and POGLUT3 which is necessary for efficient protein secretion.</text>
</comment>
<comment type="similarity">
    <text evidence="5">Belongs to the fibrillin family.</text>
</comment>
<evidence type="ECO:0000250" key="1">
    <source>
        <dbReference type="UniProtKB" id="P35555"/>
    </source>
</evidence>
<evidence type="ECO:0000250" key="2">
    <source>
        <dbReference type="UniProtKB" id="Q61554"/>
    </source>
</evidence>
<evidence type="ECO:0000255" key="3"/>
<evidence type="ECO:0000255" key="4">
    <source>
        <dbReference type="PROSITE-ProRule" id="PRU00076"/>
    </source>
</evidence>
<evidence type="ECO:0000305" key="5"/>
<protein>
    <recommendedName>
        <fullName evidence="1">Fibrillin-1</fullName>
    </recommendedName>
    <alternativeName>
        <fullName>MP340</fullName>
    </alternativeName>
    <component>
        <recommendedName>
            <fullName evidence="1">Asprosin</fullName>
        </recommendedName>
    </component>
</protein>
<organism>
    <name type="scientific">Bos taurus</name>
    <name type="common">Bovine</name>
    <dbReference type="NCBI Taxonomy" id="9913"/>
    <lineage>
        <taxon>Eukaryota</taxon>
        <taxon>Metazoa</taxon>
        <taxon>Chordata</taxon>
        <taxon>Craniata</taxon>
        <taxon>Vertebrata</taxon>
        <taxon>Euteleostomi</taxon>
        <taxon>Mammalia</taxon>
        <taxon>Eutheria</taxon>
        <taxon>Laurasiatheria</taxon>
        <taxon>Artiodactyla</taxon>
        <taxon>Ruminantia</taxon>
        <taxon>Pecora</taxon>
        <taxon>Bovidae</taxon>
        <taxon>Bovinae</taxon>
        <taxon>Bos</taxon>
    </lineage>
</organism>
<feature type="signal peptide" evidence="1">
    <location>
        <begin position="1"/>
        <end position="24"/>
    </location>
</feature>
<feature type="propeptide" id="PRO_0000436879" evidence="1">
    <location>
        <begin position="25"/>
        <end position="44"/>
    </location>
</feature>
<feature type="chain" id="PRO_0000007580" description="Fibrillin-1" evidence="1">
    <location>
        <begin position="45"/>
        <end position="2731"/>
    </location>
</feature>
<feature type="chain" id="PRO_0000436880" description="Asprosin" evidence="1">
    <location>
        <begin position="2732"/>
        <end position="2871"/>
    </location>
</feature>
<feature type="domain" description="EGF-like 1" evidence="4">
    <location>
        <begin position="81"/>
        <end position="112"/>
    </location>
</feature>
<feature type="domain" description="EGF-like 2" evidence="4">
    <location>
        <begin position="115"/>
        <end position="146"/>
    </location>
</feature>
<feature type="domain" description="EGF-like 3" evidence="4">
    <location>
        <begin position="147"/>
        <end position="178"/>
    </location>
</feature>
<feature type="domain" description="TB 1">
    <location>
        <begin position="184"/>
        <end position="236"/>
    </location>
</feature>
<feature type="domain" description="EGF-like 4; calcium-binding" evidence="4">
    <location>
        <begin position="246"/>
        <end position="287"/>
    </location>
</feature>
<feature type="domain" description="EGF-like 5; calcium-binding" evidence="4">
    <location>
        <begin position="288"/>
        <end position="329"/>
    </location>
</feature>
<feature type="domain" description="TB 2">
    <location>
        <begin position="334"/>
        <end position="389"/>
    </location>
</feature>
<feature type="domain" description="EGF-like 6" evidence="4">
    <location>
        <begin position="449"/>
        <end position="489"/>
    </location>
</feature>
<feature type="domain" description="EGF-like 7; calcium-binding" evidence="4">
    <location>
        <begin position="490"/>
        <end position="529"/>
    </location>
</feature>
<feature type="domain" description="EGF-like 8; calcium-binding" evidence="4">
    <location>
        <begin position="530"/>
        <end position="571"/>
    </location>
</feature>
<feature type="domain" description="EGF-like 9; calcium-binding" evidence="4">
    <location>
        <begin position="572"/>
        <end position="612"/>
    </location>
</feature>
<feature type="domain" description="EGF-like 10; calcium-binding" evidence="4">
    <location>
        <begin position="613"/>
        <end position="653"/>
    </location>
</feature>
<feature type="domain" description="TB 3">
    <location>
        <begin position="659"/>
        <end position="711"/>
    </location>
</feature>
<feature type="domain" description="EGF-like 11; calcium-binding" evidence="4">
    <location>
        <begin position="723"/>
        <end position="764"/>
    </location>
</feature>
<feature type="domain" description="EGF-like 12; calcium-binding" evidence="4">
    <location>
        <begin position="765"/>
        <end position="806"/>
    </location>
</feature>
<feature type="domain" description="EGF-like 13; calcium-binding" evidence="4">
    <location>
        <begin position="807"/>
        <end position="846"/>
    </location>
</feature>
<feature type="domain" description="TB 4">
    <location>
        <begin position="851"/>
        <end position="902"/>
    </location>
</feature>
<feature type="domain" description="EGF-like 14; calcium-binding" evidence="4">
    <location>
        <begin position="910"/>
        <end position="951"/>
    </location>
</feature>
<feature type="domain" description="TB 5">
    <location>
        <begin position="956"/>
        <end position="1008"/>
    </location>
</feature>
<feature type="domain" description="EGF-like 15; calcium-binding" evidence="4">
    <location>
        <begin position="1028"/>
        <end position="1069"/>
    </location>
</feature>
<feature type="domain" description="EGF-like 16; calcium-binding" evidence="4">
    <location>
        <begin position="1070"/>
        <end position="1112"/>
    </location>
</feature>
<feature type="domain" description="EGF-like 17; calcium-binding" evidence="4">
    <location>
        <begin position="1113"/>
        <end position="1154"/>
    </location>
</feature>
<feature type="domain" description="EGF-like 18; calcium-binding" evidence="4">
    <location>
        <begin position="1155"/>
        <end position="1196"/>
    </location>
</feature>
<feature type="domain" description="EGF-like 19; calcium-binding" evidence="4">
    <location>
        <begin position="1197"/>
        <end position="1237"/>
    </location>
</feature>
<feature type="domain" description="EGF-like 20; calcium-binding" evidence="4">
    <location>
        <begin position="1238"/>
        <end position="1279"/>
    </location>
</feature>
<feature type="domain" description="EGF-like 21; calcium-binding" evidence="4">
    <location>
        <begin position="1280"/>
        <end position="1321"/>
    </location>
</feature>
<feature type="domain" description="EGF-like 22; calcium-binding" evidence="4">
    <location>
        <begin position="1322"/>
        <end position="1362"/>
    </location>
</feature>
<feature type="domain" description="EGF-like 23; calcium-binding" evidence="4">
    <location>
        <begin position="1363"/>
        <end position="1403"/>
    </location>
</feature>
<feature type="domain" description="EGF-like 24; calcium-binding" evidence="4">
    <location>
        <begin position="1404"/>
        <end position="1445"/>
    </location>
</feature>
<feature type="domain" description="EGF-like 25; calcium-binding" evidence="4">
    <location>
        <begin position="1446"/>
        <end position="1486"/>
    </location>
</feature>
<feature type="domain" description="EGF-like 26; calcium-binding" evidence="4">
    <location>
        <begin position="1487"/>
        <end position="1527"/>
    </location>
</feature>
<feature type="domain" description="TB 6">
    <location>
        <begin position="1532"/>
        <end position="1589"/>
    </location>
</feature>
<feature type="domain" description="EGF-like 27; calcium-binding" evidence="4">
    <location>
        <begin position="1606"/>
        <end position="1647"/>
    </location>
</feature>
<feature type="domain" description="EGF-like 28; calcium-binding" evidence="4">
    <location>
        <begin position="1648"/>
        <end position="1688"/>
    </location>
</feature>
<feature type="domain" description="TB 7">
    <location>
        <begin position="1693"/>
        <end position="1748"/>
    </location>
</feature>
<feature type="domain" description="EGF-like 29; calcium-binding" evidence="4">
    <location>
        <begin position="1766"/>
        <end position="1807"/>
    </location>
</feature>
<feature type="domain" description="EGF-like 30; calcium-binding" evidence="4">
    <location>
        <begin position="1808"/>
        <end position="1848"/>
    </location>
</feature>
<feature type="domain" description="EGF-like 31; calcium-binding" evidence="4">
    <location>
        <begin position="1849"/>
        <end position="1890"/>
    </location>
</feature>
<feature type="domain" description="EGF-like 32; calcium-binding" evidence="4">
    <location>
        <begin position="1891"/>
        <end position="1929"/>
    </location>
</feature>
<feature type="domain" description="EGF-like 33; calcium-binding" evidence="4">
    <location>
        <begin position="1930"/>
        <end position="1972"/>
    </location>
</feature>
<feature type="domain" description="EGF-like 34; calcium-binding" evidence="4">
    <location>
        <begin position="1973"/>
        <end position="2012"/>
    </location>
</feature>
<feature type="domain" description="EGF-like 35; calcium-binding" evidence="4">
    <location>
        <begin position="2013"/>
        <end position="2054"/>
    </location>
</feature>
<feature type="domain" description="TB 8">
    <location>
        <begin position="2059"/>
        <end position="2111"/>
    </location>
</feature>
<feature type="domain" description="EGF-like 36; calcium-binding" evidence="4">
    <location>
        <begin position="2127"/>
        <end position="2165"/>
    </location>
</feature>
<feature type="domain" description="EGF-like 37; calcium-binding" evidence="4">
    <location>
        <begin position="2166"/>
        <end position="2205"/>
    </location>
</feature>
<feature type="domain" description="EGF-like 38; calcium-binding" evidence="4">
    <location>
        <begin position="2206"/>
        <end position="2246"/>
    </location>
</feature>
<feature type="domain" description="EGF-like 39; calcium-binding" evidence="4">
    <location>
        <begin position="2247"/>
        <end position="2290"/>
    </location>
</feature>
<feature type="domain" description="EGF-like 40; calcium-binding" evidence="4">
    <location>
        <begin position="2291"/>
        <end position="2332"/>
    </location>
</feature>
<feature type="domain" description="TB 9">
    <location>
        <begin position="2337"/>
        <end position="2390"/>
    </location>
</feature>
<feature type="domain" description="EGF-like 41; calcium-binding" evidence="4">
    <location>
        <begin position="2402"/>
        <end position="2443"/>
    </location>
</feature>
<feature type="domain" description="EGF-like 42; calcium-binding" evidence="4">
    <location>
        <begin position="2444"/>
        <end position="2484"/>
    </location>
</feature>
<feature type="domain" description="EGF-like 43; calcium-binding" evidence="4">
    <location>
        <begin position="2485"/>
        <end position="2523"/>
    </location>
</feature>
<feature type="domain" description="EGF-like 44; calcium-binding" evidence="4">
    <location>
        <begin position="2524"/>
        <end position="2566"/>
    </location>
</feature>
<feature type="domain" description="EGF-like 45; calcium-binding" evidence="4">
    <location>
        <begin position="2567"/>
        <end position="2606"/>
    </location>
</feature>
<feature type="domain" description="EGF-like 46; calcium-binding" evidence="4">
    <location>
        <begin position="2607"/>
        <end position="2647"/>
    </location>
</feature>
<feature type="domain" description="EGF-like 47; calcium-binding" evidence="4">
    <location>
        <begin position="2648"/>
        <end position="2687"/>
    </location>
</feature>
<feature type="region of interest" description="N-terminal domain" evidence="1">
    <location>
        <begin position="45"/>
        <end position="450"/>
    </location>
</feature>
<feature type="region of interest" description="Fibrillin unique N-terminal (FUN) domain" evidence="1">
    <location>
        <begin position="45"/>
        <end position="81"/>
    </location>
</feature>
<feature type="region of interest" description="Interaction with MFAP4" evidence="1">
    <location>
        <begin position="119"/>
        <end position="329"/>
    </location>
</feature>
<feature type="region of interest" description="Hybrid domain 1" evidence="1">
    <location>
        <begin position="195"/>
        <end position="221"/>
    </location>
</feature>
<feature type="region of interest" description="Hybrid domain 2" evidence="1">
    <location>
        <begin position="862"/>
        <end position="887"/>
    </location>
</feature>
<feature type="region of interest" description="C-terminal domain" evidence="1">
    <location>
        <begin position="1528"/>
        <end position="2731"/>
    </location>
</feature>
<feature type="short sequence motif" description="Cell attachment site" evidence="1">
    <location>
        <begin position="1541"/>
        <end position="1543"/>
    </location>
</feature>
<feature type="site" description="Cleavage; by furin" evidence="1">
    <location>
        <begin position="44"/>
        <end position="45"/>
    </location>
</feature>
<feature type="site" description="Cleavage; by furin" evidence="1">
    <location>
        <begin position="2731"/>
        <end position="2732"/>
    </location>
</feature>
<feature type="modified residue" description="Phosphoserine" evidence="1">
    <location>
        <position position="2702"/>
    </location>
</feature>
<feature type="modified residue" description="Phosphoserine" evidence="2">
    <location>
        <position position="2709"/>
    </location>
</feature>
<feature type="glycosylation site" description="O-linked (Glc) serine" evidence="1">
    <location>
        <position position="268"/>
    </location>
</feature>
<feature type="glycosylation site" description="N-linked (GlcNAc...) asparagine" evidence="3">
    <location>
        <position position="448"/>
    </location>
</feature>
<feature type="glycosylation site" description="O-linked (Glc) serine" evidence="1">
    <location>
        <position position="471"/>
    </location>
</feature>
<feature type="glycosylation site" description="O-linked (Glc) serine" evidence="1">
    <location>
        <position position="510"/>
    </location>
</feature>
<feature type="glycosylation site" description="N-linked (GlcNAc...) asparagine" evidence="3">
    <location>
        <position position="1067"/>
    </location>
</feature>
<feature type="glycosylation site" description="O-linked (Glc) serine" evidence="1">
    <location>
        <position position="1135"/>
    </location>
</feature>
<feature type="glycosylation site" description="N-linked (GlcNAc...) asparagine" evidence="3">
    <location>
        <position position="1149"/>
    </location>
</feature>
<feature type="glycosylation site" description="O-linked (Glc) serine" evidence="1">
    <location>
        <position position="1218"/>
    </location>
</feature>
<feature type="glycosylation site" description="O-linked (Glc) serine" evidence="1">
    <location>
        <position position="1302"/>
    </location>
</feature>
<feature type="glycosylation site" description="O-linked (Glc) serine" evidence="1">
    <location>
        <position position="1345"/>
    </location>
</feature>
<feature type="glycosylation site" description="N-linked (GlcNAc...) asparagine" evidence="3">
    <location>
        <position position="1369"/>
    </location>
</feature>
<feature type="glycosylation site" description="O-linked (Glc) serine" evidence="1">
    <location>
        <position position="1386"/>
    </location>
</feature>
<feature type="glycosylation site" description="N-linked (GlcNAc...) asparagine" evidence="3">
    <location>
        <position position="1484"/>
    </location>
</feature>
<feature type="glycosylation site" description="O-linked (Glc) serine" evidence="1">
    <location>
        <position position="1508"/>
    </location>
</feature>
<feature type="glycosylation site" description="N-linked (GlcNAc...) asparagine" evidence="3">
    <location>
        <position position="1581"/>
    </location>
</feature>
<feature type="glycosylation site" description="O-linked (Glc) serine" evidence="1">
    <location>
        <position position="1628"/>
    </location>
</feature>
<feature type="glycosylation site" description="N-linked (GlcNAc...) asparagine" evidence="3">
    <location>
        <position position="1669"/>
    </location>
</feature>
<feature type="glycosylation site" description="N-linked (GlcNAc...) asparagine" evidence="3">
    <location>
        <position position="1703"/>
    </location>
</feature>
<feature type="glycosylation site" description="N-linked (GlcNAc...) asparagine" evidence="3">
    <location>
        <position position="1713"/>
    </location>
</feature>
<feature type="glycosylation site" description="O-linked (Glc) serine" evidence="1">
    <location>
        <position position="1830"/>
    </location>
</feature>
<feature type="glycosylation site" description="O-linked (Glc) serine" evidence="1">
    <location>
        <position position="1871"/>
    </location>
</feature>
<feature type="glycosylation site" description="N-linked (GlcNAc...) asparagine" evidence="3">
    <location>
        <position position="1902"/>
    </location>
</feature>
<feature type="glycosylation site" description="O-linked (Glc) serine" evidence="1">
    <location>
        <position position="1911"/>
    </location>
</feature>
<feature type="glycosylation site" description="O-linked (Glc) serine" evidence="1">
    <location>
        <position position="1953"/>
    </location>
</feature>
<feature type="glycosylation site" description="O-linked (Glc) serine" evidence="1">
    <location>
        <position position="2035"/>
    </location>
</feature>
<feature type="glycosylation site" description="N-linked (GlcNAc...) asparagine" evidence="3">
    <location>
        <position position="2077"/>
    </location>
</feature>
<feature type="glycosylation site" description="O-linked (Glc) serine" evidence="1">
    <location>
        <position position="2148"/>
    </location>
</feature>
<feature type="glycosylation site" description="N-linked (GlcNAc...) asparagine" evidence="3">
    <location>
        <position position="2178"/>
    </location>
</feature>
<feature type="glycosylation site" description="O-linked (Glc) serine" evidence="1">
    <location>
        <position position="2227"/>
    </location>
</feature>
<feature type="glycosylation site" description="O-linked (Glc) serine" evidence="1">
    <location>
        <position position="2313"/>
    </location>
</feature>
<feature type="glycosylation site" description="O-linked (Glc) serine" evidence="1">
    <location>
        <position position="2465"/>
    </location>
</feature>
<feature type="glycosylation site" description="O-linked (Glc) serine" evidence="1">
    <location>
        <position position="2547"/>
    </location>
</feature>
<feature type="glycosylation site" description="O-linked (Glc) serine" evidence="1">
    <location>
        <position position="2628"/>
    </location>
</feature>
<feature type="glycosylation site" description="N-linked (GlcNAc...) asparagine" evidence="3">
    <location>
        <position position="2734"/>
    </location>
</feature>
<feature type="glycosylation site" description="N-linked (GlcNAc...) asparagine" evidence="3">
    <location>
        <position position="2750"/>
    </location>
</feature>
<feature type="glycosylation site" description="N-linked (GlcNAc...) asparagine" evidence="3">
    <location>
        <position position="2767"/>
    </location>
</feature>
<feature type="disulfide bond" evidence="1">
    <location>
        <begin position="59"/>
        <end position="68"/>
    </location>
</feature>
<feature type="disulfide bond" evidence="1">
    <location>
        <begin position="67"/>
        <end position="80"/>
    </location>
</feature>
<feature type="disulfide bond" evidence="4">
    <location>
        <begin position="85"/>
        <end position="94"/>
    </location>
</feature>
<feature type="disulfide bond" evidence="4">
    <location>
        <begin position="89"/>
        <end position="100"/>
    </location>
</feature>
<feature type="disulfide bond" evidence="4">
    <location>
        <begin position="102"/>
        <end position="111"/>
    </location>
</feature>
<feature type="disulfide bond" evidence="4">
    <location>
        <begin position="119"/>
        <end position="129"/>
    </location>
</feature>
<feature type="disulfide bond" evidence="4">
    <location>
        <begin position="123"/>
        <end position="134"/>
    </location>
</feature>
<feature type="disulfide bond" evidence="4">
    <location>
        <begin position="136"/>
        <end position="145"/>
    </location>
</feature>
<feature type="disulfide bond" evidence="4">
    <location>
        <begin position="150"/>
        <end position="160"/>
    </location>
</feature>
<feature type="disulfide bond" evidence="4">
    <location>
        <begin position="154"/>
        <end position="166"/>
    </location>
</feature>
<feature type="disulfide bond" evidence="4">
    <location>
        <begin position="168"/>
        <end position="177"/>
    </location>
</feature>
<feature type="disulfide bond" evidence="4">
    <location>
        <begin position="250"/>
        <end position="262"/>
    </location>
</feature>
<feature type="disulfide bond" evidence="4">
    <location>
        <begin position="257"/>
        <end position="271"/>
    </location>
</feature>
<feature type="disulfide bond" evidence="4">
    <location>
        <begin position="273"/>
        <end position="286"/>
    </location>
</feature>
<feature type="disulfide bond" evidence="4">
    <location>
        <begin position="292"/>
        <end position="304"/>
    </location>
</feature>
<feature type="disulfide bond" evidence="4">
    <location>
        <begin position="299"/>
        <end position="313"/>
    </location>
</feature>
<feature type="disulfide bond" evidence="4">
    <location>
        <begin position="315"/>
        <end position="328"/>
    </location>
</feature>
<feature type="disulfide bond" evidence="4">
    <location>
        <begin position="453"/>
        <end position="465"/>
    </location>
</feature>
<feature type="disulfide bond" evidence="4">
    <location>
        <begin position="460"/>
        <end position="474"/>
    </location>
</feature>
<feature type="disulfide bond" evidence="4">
    <location>
        <begin position="476"/>
        <end position="488"/>
    </location>
</feature>
<feature type="disulfide bond" evidence="4">
    <location>
        <begin position="494"/>
        <end position="504"/>
    </location>
</feature>
<feature type="disulfide bond" evidence="4">
    <location>
        <begin position="499"/>
        <end position="513"/>
    </location>
</feature>
<feature type="disulfide bond" evidence="4">
    <location>
        <begin position="515"/>
        <end position="528"/>
    </location>
</feature>
<feature type="disulfide bond" evidence="4">
    <location>
        <begin position="534"/>
        <end position="546"/>
    </location>
</feature>
<feature type="disulfide bond" evidence="4">
    <location>
        <begin position="541"/>
        <end position="555"/>
    </location>
</feature>
<feature type="disulfide bond" evidence="4">
    <location>
        <begin position="557"/>
        <end position="570"/>
    </location>
</feature>
<feature type="disulfide bond" evidence="4">
    <location>
        <begin position="576"/>
        <end position="587"/>
    </location>
</feature>
<feature type="disulfide bond" evidence="4">
    <location>
        <begin position="582"/>
        <end position="596"/>
    </location>
</feature>
<feature type="disulfide bond" evidence="4">
    <location>
        <begin position="598"/>
        <end position="611"/>
    </location>
</feature>
<feature type="disulfide bond" evidence="4">
    <location>
        <begin position="617"/>
        <end position="628"/>
    </location>
</feature>
<feature type="disulfide bond" evidence="4">
    <location>
        <begin position="623"/>
        <end position="637"/>
    </location>
</feature>
<feature type="disulfide bond" evidence="4">
    <location>
        <begin position="639"/>
        <end position="652"/>
    </location>
</feature>
<feature type="disulfide bond" evidence="4">
    <location>
        <begin position="727"/>
        <end position="739"/>
    </location>
</feature>
<feature type="disulfide bond" evidence="4">
    <location>
        <begin position="734"/>
        <end position="748"/>
    </location>
</feature>
<feature type="disulfide bond" evidence="4">
    <location>
        <begin position="750"/>
        <end position="763"/>
    </location>
</feature>
<feature type="disulfide bond" evidence="4">
    <location>
        <begin position="769"/>
        <end position="781"/>
    </location>
</feature>
<feature type="disulfide bond" evidence="4">
    <location>
        <begin position="776"/>
        <end position="790"/>
    </location>
</feature>
<feature type="disulfide bond" evidence="4">
    <location>
        <begin position="792"/>
        <end position="805"/>
    </location>
</feature>
<feature type="disulfide bond" evidence="4">
    <location>
        <begin position="811"/>
        <end position="821"/>
    </location>
</feature>
<feature type="disulfide bond" evidence="4">
    <location>
        <begin position="816"/>
        <end position="830"/>
    </location>
</feature>
<feature type="disulfide bond" evidence="4">
    <location>
        <begin position="832"/>
        <end position="845"/>
    </location>
</feature>
<feature type="disulfide bond" evidence="4">
    <location>
        <begin position="853"/>
        <end position="875"/>
    </location>
</feature>
<feature type="disulfide bond" evidence="4">
    <location>
        <begin position="862"/>
        <end position="887"/>
    </location>
</feature>
<feature type="disulfide bond" evidence="4">
    <location>
        <begin position="876"/>
        <end position="890"/>
    </location>
</feature>
<feature type="disulfide bond" evidence="4">
    <location>
        <begin position="896"/>
        <end position="908"/>
    </location>
</feature>
<feature type="disulfide bond" evidence="4">
    <location>
        <begin position="914"/>
        <end position="926"/>
    </location>
</feature>
<feature type="disulfide bond" evidence="4">
    <location>
        <begin position="921"/>
        <end position="935"/>
    </location>
</feature>
<feature type="disulfide bond" evidence="4">
    <location>
        <begin position="937"/>
        <end position="950"/>
    </location>
</feature>
<feature type="disulfide bond" evidence="4">
    <location>
        <begin position="1032"/>
        <end position="1044"/>
    </location>
</feature>
<feature type="disulfide bond" evidence="4">
    <location>
        <begin position="1039"/>
        <end position="1053"/>
    </location>
</feature>
<feature type="disulfide bond" evidence="4">
    <location>
        <begin position="1055"/>
        <end position="1068"/>
    </location>
</feature>
<feature type="disulfide bond" evidence="4">
    <location>
        <begin position="1074"/>
        <end position="1086"/>
    </location>
</feature>
<feature type="disulfide bond" evidence="4">
    <location>
        <begin position="1081"/>
        <end position="1095"/>
    </location>
</feature>
<feature type="disulfide bond" evidence="4">
    <location>
        <begin position="1097"/>
        <end position="1111"/>
    </location>
</feature>
<feature type="disulfide bond" evidence="4">
    <location>
        <begin position="1117"/>
        <end position="1129"/>
    </location>
</feature>
<feature type="disulfide bond" evidence="4">
    <location>
        <begin position="1124"/>
        <end position="1138"/>
    </location>
</feature>
<feature type="disulfide bond" evidence="4">
    <location>
        <begin position="1140"/>
        <end position="1153"/>
    </location>
</feature>
<feature type="disulfide bond" evidence="4">
    <location>
        <begin position="1159"/>
        <end position="1171"/>
    </location>
</feature>
<feature type="disulfide bond" evidence="4">
    <location>
        <begin position="1166"/>
        <end position="1180"/>
    </location>
</feature>
<feature type="disulfide bond" evidence="4">
    <location>
        <begin position="1182"/>
        <end position="1195"/>
    </location>
</feature>
<feature type="disulfide bond" evidence="4">
    <location>
        <begin position="1201"/>
        <end position="1212"/>
    </location>
</feature>
<feature type="disulfide bond" evidence="4">
    <location>
        <begin position="1208"/>
        <end position="1221"/>
    </location>
</feature>
<feature type="disulfide bond" evidence="4">
    <location>
        <begin position="1223"/>
        <end position="1236"/>
    </location>
</feature>
<feature type="disulfide bond" evidence="4">
    <location>
        <begin position="1242"/>
        <end position="1254"/>
    </location>
</feature>
<feature type="disulfide bond" evidence="4">
    <location>
        <begin position="1249"/>
        <end position="1263"/>
    </location>
</feature>
<feature type="disulfide bond" evidence="4">
    <location>
        <begin position="1265"/>
        <end position="1278"/>
    </location>
</feature>
<feature type="disulfide bond" evidence="4">
    <location>
        <begin position="1284"/>
        <end position="1296"/>
    </location>
</feature>
<feature type="disulfide bond" evidence="4">
    <location>
        <begin position="1291"/>
        <end position="1305"/>
    </location>
</feature>
<feature type="disulfide bond" evidence="4">
    <location>
        <begin position="1307"/>
        <end position="1320"/>
    </location>
</feature>
<feature type="disulfide bond" evidence="4">
    <location>
        <begin position="1326"/>
        <end position="1339"/>
    </location>
</feature>
<feature type="disulfide bond" evidence="4">
    <location>
        <begin position="1333"/>
        <end position="1348"/>
    </location>
</feature>
<feature type="disulfide bond" evidence="4">
    <location>
        <begin position="1350"/>
        <end position="1361"/>
    </location>
</feature>
<feature type="disulfide bond" evidence="4">
    <location>
        <begin position="1367"/>
        <end position="1380"/>
    </location>
</feature>
<feature type="disulfide bond" evidence="4">
    <location>
        <begin position="1374"/>
        <end position="1389"/>
    </location>
</feature>
<feature type="disulfide bond" evidence="4">
    <location>
        <begin position="1391"/>
        <end position="1402"/>
    </location>
</feature>
<feature type="disulfide bond" evidence="4">
    <location>
        <begin position="1408"/>
        <end position="1420"/>
    </location>
</feature>
<feature type="disulfide bond" evidence="4">
    <location>
        <begin position="1415"/>
        <end position="1429"/>
    </location>
</feature>
<feature type="disulfide bond" evidence="4">
    <location>
        <begin position="1431"/>
        <end position="1444"/>
    </location>
</feature>
<feature type="disulfide bond" evidence="4">
    <location>
        <begin position="1450"/>
        <end position="1461"/>
    </location>
</feature>
<feature type="disulfide bond" evidence="4">
    <location>
        <begin position="1456"/>
        <end position="1470"/>
    </location>
</feature>
<feature type="disulfide bond" evidence="4">
    <location>
        <begin position="1472"/>
        <end position="1485"/>
    </location>
</feature>
<feature type="disulfide bond" evidence="4">
    <location>
        <begin position="1491"/>
        <end position="1502"/>
    </location>
</feature>
<feature type="disulfide bond" evidence="4">
    <location>
        <begin position="1497"/>
        <end position="1511"/>
    </location>
</feature>
<feature type="disulfide bond" evidence="4">
    <location>
        <begin position="1513"/>
        <end position="1526"/>
    </location>
</feature>
<feature type="disulfide bond" evidence="4">
    <location>
        <begin position="1534"/>
        <end position="1562"/>
    </location>
</feature>
<feature type="disulfide bond" evidence="4">
    <location>
        <begin position="1549"/>
        <end position="1574"/>
    </location>
</feature>
<feature type="disulfide bond" evidence="4">
    <location>
        <begin position="1563"/>
        <end position="1577"/>
    </location>
</feature>
<feature type="disulfide bond" evidence="4">
    <location>
        <begin position="1564"/>
        <end position="1589"/>
    </location>
</feature>
<feature type="disulfide bond" evidence="4">
    <location>
        <begin position="1610"/>
        <end position="1622"/>
    </location>
</feature>
<feature type="disulfide bond" evidence="4">
    <location>
        <begin position="1617"/>
        <end position="1631"/>
    </location>
</feature>
<feature type="disulfide bond" evidence="4">
    <location>
        <begin position="1633"/>
        <end position="1646"/>
    </location>
</feature>
<feature type="disulfide bond" evidence="4">
    <location>
        <begin position="1652"/>
        <end position="1663"/>
    </location>
</feature>
<feature type="disulfide bond" evidence="4">
    <location>
        <begin position="1658"/>
        <end position="1672"/>
    </location>
</feature>
<feature type="disulfide bond" evidence="4">
    <location>
        <begin position="1674"/>
        <end position="1687"/>
    </location>
</feature>
<feature type="disulfide bond" evidence="4">
    <location>
        <begin position="1770"/>
        <end position="1782"/>
    </location>
</feature>
<feature type="disulfide bond" evidence="4">
    <location>
        <begin position="1777"/>
        <end position="1791"/>
    </location>
</feature>
<feature type="disulfide bond" evidence="4">
    <location>
        <begin position="1793"/>
        <end position="1806"/>
    </location>
</feature>
<feature type="disulfide bond" evidence="4">
    <location>
        <begin position="1812"/>
        <end position="1824"/>
    </location>
</feature>
<feature type="disulfide bond" evidence="4">
    <location>
        <begin position="1818"/>
        <end position="1833"/>
    </location>
</feature>
<feature type="disulfide bond" evidence="4">
    <location>
        <begin position="1835"/>
        <end position="1847"/>
    </location>
</feature>
<feature type="disulfide bond" evidence="4">
    <location>
        <begin position="1853"/>
        <end position="1865"/>
    </location>
</feature>
<feature type="disulfide bond" evidence="4">
    <location>
        <begin position="1860"/>
        <end position="1874"/>
    </location>
</feature>
<feature type="disulfide bond" evidence="4">
    <location>
        <begin position="1876"/>
        <end position="1889"/>
    </location>
</feature>
<feature type="disulfide bond" evidence="4">
    <location>
        <begin position="1895"/>
        <end position="1905"/>
    </location>
</feature>
<feature type="disulfide bond" evidence="4">
    <location>
        <begin position="1900"/>
        <end position="1914"/>
    </location>
</feature>
<feature type="disulfide bond" evidence="4">
    <location>
        <begin position="1916"/>
        <end position="1928"/>
    </location>
</feature>
<feature type="disulfide bond" evidence="4">
    <location>
        <begin position="1934"/>
        <end position="1947"/>
    </location>
</feature>
<feature type="disulfide bond" evidence="4">
    <location>
        <begin position="1942"/>
        <end position="1956"/>
    </location>
</feature>
<feature type="disulfide bond" evidence="4">
    <location>
        <begin position="1958"/>
        <end position="1971"/>
    </location>
</feature>
<feature type="disulfide bond" evidence="4">
    <location>
        <begin position="1977"/>
        <end position="1989"/>
    </location>
</feature>
<feature type="disulfide bond" evidence="4">
    <location>
        <begin position="1984"/>
        <end position="1998"/>
    </location>
</feature>
<feature type="disulfide bond" evidence="4">
    <location>
        <begin position="2000"/>
        <end position="2011"/>
    </location>
</feature>
<feature type="disulfide bond" evidence="4">
    <location>
        <begin position="2017"/>
        <end position="2029"/>
    </location>
</feature>
<feature type="disulfide bond" evidence="4">
    <location>
        <begin position="2024"/>
        <end position="2038"/>
    </location>
</feature>
<feature type="disulfide bond" evidence="4">
    <location>
        <begin position="2040"/>
        <end position="2053"/>
    </location>
</feature>
<feature type="disulfide bond" evidence="1 4">
    <location>
        <begin position="2061"/>
        <end position="2083"/>
    </location>
</feature>
<feature type="disulfide bond" evidence="1 4">
    <location>
        <begin position="2070"/>
        <end position="2096"/>
    </location>
</feature>
<feature type="disulfide bond" evidence="1 4">
    <location>
        <begin position="2084"/>
        <end position="2099"/>
    </location>
</feature>
<feature type="disulfide bond" evidence="1 4">
    <location>
        <begin position="2085"/>
        <end position="2111"/>
    </location>
</feature>
<feature type="disulfide bond" evidence="4">
    <location>
        <begin position="2131"/>
        <end position="2142"/>
    </location>
</feature>
<feature type="disulfide bond" evidence="4">
    <location>
        <begin position="2137"/>
        <end position="2151"/>
    </location>
</feature>
<feature type="disulfide bond" evidence="4">
    <location>
        <begin position="2153"/>
        <end position="2164"/>
    </location>
</feature>
<feature type="disulfide bond" evidence="4">
    <location>
        <begin position="2170"/>
        <end position="2181"/>
    </location>
</feature>
<feature type="disulfide bond" evidence="4">
    <location>
        <begin position="2176"/>
        <end position="2190"/>
    </location>
</feature>
<feature type="disulfide bond" evidence="4">
    <location>
        <begin position="2192"/>
        <end position="2204"/>
    </location>
</feature>
<feature type="disulfide bond" evidence="4">
    <location>
        <begin position="2210"/>
        <end position="2221"/>
    </location>
</feature>
<feature type="disulfide bond" evidence="4">
    <location>
        <begin position="2217"/>
        <end position="2230"/>
    </location>
</feature>
<feature type="disulfide bond" evidence="4">
    <location>
        <begin position="2232"/>
        <end position="2245"/>
    </location>
</feature>
<feature type="disulfide bond" evidence="4">
    <location>
        <begin position="2251"/>
        <end position="2265"/>
    </location>
</feature>
<feature type="disulfide bond" evidence="4">
    <location>
        <begin position="2258"/>
        <end position="2274"/>
    </location>
</feature>
<feature type="disulfide bond" evidence="4">
    <location>
        <begin position="2276"/>
        <end position="2289"/>
    </location>
</feature>
<feature type="disulfide bond" evidence="4">
    <location>
        <begin position="2295"/>
        <end position="2307"/>
    </location>
</feature>
<feature type="disulfide bond" evidence="4">
    <location>
        <begin position="2302"/>
        <end position="2316"/>
    </location>
</feature>
<feature type="disulfide bond" evidence="4">
    <location>
        <begin position="2318"/>
        <end position="2331"/>
    </location>
</feature>
<feature type="disulfide bond" evidence="4">
    <location>
        <begin position="2406"/>
        <end position="2418"/>
    </location>
</feature>
<feature type="disulfide bond" evidence="4">
    <location>
        <begin position="2413"/>
        <end position="2427"/>
    </location>
</feature>
<feature type="disulfide bond" evidence="4">
    <location>
        <begin position="2429"/>
        <end position="2442"/>
    </location>
</feature>
<feature type="disulfide bond" evidence="4">
    <location>
        <begin position="2448"/>
        <end position="2459"/>
    </location>
</feature>
<feature type="disulfide bond" evidence="4">
    <location>
        <begin position="2455"/>
        <end position="2468"/>
    </location>
</feature>
<feature type="disulfide bond" evidence="4">
    <location>
        <begin position="2470"/>
        <end position="2483"/>
    </location>
</feature>
<feature type="disulfide bond" evidence="4">
    <location>
        <begin position="2489"/>
        <end position="2500"/>
    </location>
</feature>
<feature type="disulfide bond" evidence="4">
    <location>
        <begin position="2496"/>
        <end position="2509"/>
    </location>
</feature>
<feature type="disulfide bond" evidence="4">
    <location>
        <begin position="2511"/>
        <end position="2522"/>
    </location>
</feature>
<feature type="disulfide bond" evidence="4">
    <location>
        <begin position="2528"/>
        <end position="2541"/>
    </location>
</feature>
<feature type="disulfide bond" evidence="4">
    <location>
        <begin position="2535"/>
        <end position="2550"/>
    </location>
</feature>
<feature type="disulfide bond" evidence="4">
    <location>
        <begin position="2552"/>
        <end position="2565"/>
    </location>
</feature>
<feature type="disulfide bond" evidence="4">
    <location>
        <begin position="2571"/>
        <end position="2581"/>
    </location>
</feature>
<feature type="disulfide bond" evidence="4">
    <location>
        <begin position="2577"/>
        <end position="2590"/>
    </location>
</feature>
<feature type="disulfide bond" evidence="4">
    <location>
        <begin position="2592"/>
        <end position="2605"/>
    </location>
</feature>
<feature type="disulfide bond" evidence="4">
    <location>
        <begin position="2611"/>
        <end position="2622"/>
    </location>
</feature>
<feature type="disulfide bond" evidence="4">
    <location>
        <begin position="2617"/>
        <end position="2631"/>
    </location>
</feature>
<feature type="disulfide bond" evidence="4">
    <location>
        <begin position="2633"/>
        <end position="2646"/>
    </location>
</feature>
<feature type="disulfide bond" evidence="4">
    <location>
        <begin position="2652"/>
        <end position="2663"/>
    </location>
</feature>
<feature type="disulfide bond" evidence="4">
    <location>
        <begin position="2659"/>
        <end position="2672"/>
    </location>
</feature>
<feature type="disulfide bond" evidence="4">
    <location>
        <begin position="2674"/>
        <end position="2686"/>
    </location>
</feature>
<feature type="sequence conflict" description="In Ref. 1; AAA74122." evidence="5" ref="1">
    <original>D</original>
    <variation>N</variation>
    <location>
        <position position="51"/>
    </location>
</feature>
<feature type="sequence conflict" description="In Ref. 1; AAA74122." evidence="5" ref="1">
    <original>V</original>
    <variation>A</variation>
    <location>
        <position position="362"/>
    </location>
</feature>
<feature type="sequence conflict" description="In Ref. 1; AAA74122." evidence="5" ref="1">
    <original>P</original>
    <variation>L</variation>
    <location>
        <position position="620"/>
    </location>
</feature>
<feature type="sequence conflict" description="In Ref. 1; AAA74122." evidence="5" ref="1">
    <original>S</original>
    <variation>T</variation>
    <location>
        <position position="2561"/>
    </location>
</feature>
<dbReference type="EMBL" id="L28748">
    <property type="protein sequence ID" value="AAA74122.1"/>
    <property type="molecule type" value="mRNA"/>
</dbReference>
<dbReference type="EMBL" id="DAAA02029120">
    <property type="status" value="NOT_ANNOTATED_CDS"/>
    <property type="molecule type" value="Genomic_DNA"/>
</dbReference>
<dbReference type="EMBL" id="DAAA02029121">
    <property type="status" value="NOT_ANNOTATED_CDS"/>
    <property type="molecule type" value="Genomic_DNA"/>
</dbReference>
<dbReference type="EMBL" id="DAAA02029122">
    <property type="status" value="NOT_ANNOTATED_CDS"/>
    <property type="molecule type" value="Genomic_DNA"/>
</dbReference>
<dbReference type="PIR" id="A55567">
    <property type="entry name" value="A55567"/>
</dbReference>
<dbReference type="RefSeq" id="NP_776478.1">
    <property type="nucleotide sequence ID" value="NM_174053.2"/>
</dbReference>
<dbReference type="RefSeq" id="XP_015328665.1">
    <property type="nucleotide sequence ID" value="XM_015473179.3"/>
</dbReference>
<dbReference type="BMRB" id="P98133"/>
<dbReference type="SMR" id="P98133"/>
<dbReference type="FunCoup" id="P98133">
    <property type="interactions" value="656"/>
</dbReference>
<dbReference type="STRING" id="9913.ENSBTAP00000064428"/>
<dbReference type="GlyCosmos" id="P98133">
    <property type="glycosylation" value="36 sites, No reported glycans"/>
</dbReference>
<dbReference type="GlyGen" id="P98133">
    <property type="glycosylation" value="36 sites"/>
</dbReference>
<dbReference type="PaxDb" id="9913-ENSBTAP00000002944"/>
<dbReference type="PeptideAtlas" id="P98133"/>
<dbReference type="GeneID" id="281154"/>
<dbReference type="KEGG" id="bta:281154"/>
<dbReference type="CTD" id="2200"/>
<dbReference type="VEuPathDB" id="HostDB:ENSBTAG00000002278"/>
<dbReference type="eggNOG" id="KOG1217">
    <property type="taxonomic scope" value="Eukaryota"/>
</dbReference>
<dbReference type="InParanoid" id="P98133"/>
<dbReference type="OMA" id="DPKCHAG"/>
<dbReference type="OrthoDB" id="4062651at2759"/>
<dbReference type="TreeFam" id="TF316849"/>
<dbReference type="Reactome" id="R-BTA-1474228">
    <property type="pathway name" value="Degradation of the extracellular matrix"/>
</dbReference>
<dbReference type="Reactome" id="R-BTA-1566948">
    <property type="pathway name" value="Elastic fibre formation"/>
</dbReference>
<dbReference type="Reactome" id="R-BTA-2129379">
    <property type="pathway name" value="Molecules associated with elastic fibres"/>
</dbReference>
<dbReference type="Reactome" id="R-BTA-216083">
    <property type="pathway name" value="Integrin cell surface interactions"/>
</dbReference>
<dbReference type="Reactome" id="R-BTA-2173789">
    <property type="pathway name" value="TGF-beta receptor signaling activates SMADs"/>
</dbReference>
<dbReference type="Reactome" id="R-BTA-381426">
    <property type="pathway name" value="Regulation of Insulin-like Growth Factor (IGF) transport and uptake by Insulin-like Growth Factor Binding Proteins (IGFBPs)"/>
</dbReference>
<dbReference type="Reactome" id="R-BTA-8957275">
    <property type="pathway name" value="Post-translational protein phosphorylation"/>
</dbReference>
<dbReference type="Proteomes" id="UP000009136">
    <property type="component" value="Chromosome 10"/>
</dbReference>
<dbReference type="Bgee" id="ENSBTAG00000002278">
    <property type="expression patterns" value="Expressed in intramuscular adipose tissue and 107 other cell types or tissues"/>
</dbReference>
<dbReference type="GO" id="GO:0031012">
    <property type="term" value="C:extracellular matrix"/>
    <property type="evidence" value="ECO:0000318"/>
    <property type="project" value="GO_Central"/>
</dbReference>
<dbReference type="GO" id="GO:0005576">
    <property type="term" value="C:extracellular region"/>
    <property type="evidence" value="ECO:0000250"/>
    <property type="project" value="UniProtKB"/>
</dbReference>
<dbReference type="GO" id="GO:0001527">
    <property type="term" value="C:microfibril"/>
    <property type="evidence" value="ECO:0000314"/>
    <property type="project" value="UniProtKB"/>
</dbReference>
<dbReference type="GO" id="GO:0005509">
    <property type="term" value="F:calcium ion binding"/>
    <property type="evidence" value="ECO:0007669"/>
    <property type="project" value="InterPro"/>
</dbReference>
<dbReference type="GO" id="GO:0005201">
    <property type="term" value="F:extracellular matrix structural constituent"/>
    <property type="evidence" value="ECO:0000318"/>
    <property type="project" value="GO_Central"/>
</dbReference>
<dbReference type="GO" id="GO:0008201">
    <property type="term" value="F:heparin binding"/>
    <property type="evidence" value="ECO:0000250"/>
    <property type="project" value="UniProtKB"/>
</dbReference>
<dbReference type="GO" id="GO:0005179">
    <property type="term" value="F:hormone activity"/>
    <property type="evidence" value="ECO:0007669"/>
    <property type="project" value="UniProtKB-KW"/>
</dbReference>
<dbReference type="GO" id="GO:0009653">
    <property type="term" value="P:anatomical structure morphogenesis"/>
    <property type="evidence" value="ECO:0000318"/>
    <property type="project" value="GO_Central"/>
</dbReference>
<dbReference type="CDD" id="cd00054">
    <property type="entry name" value="EGF_CA"/>
    <property type="match status" value="30"/>
</dbReference>
<dbReference type="FunFam" id="2.10.25.10:FF:000005">
    <property type="entry name" value="Fibrillin 2"/>
    <property type="match status" value="1"/>
</dbReference>
<dbReference type="FunFam" id="2.10.25.10:FF:000023">
    <property type="entry name" value="Fibrillin 2"/>
    <property type="match status" value="2"/>
</dbReference>
<dbReference type="FunFam" id="2.10.25.10:FF:000038">
    <property type="entry name" value="Fibrillin 2"/>
    <property type="match status" value="1"/>
</dbReference>
<dbReference type="FunFam" id="2.10.25.10:FF:000044">
    <property type="entry name" value="Fibrillin 2"/>
    <property type="match status" value="1"/>
</dbReference>
<dbReference type="FunFam" id="2.10.25.10:FF:000049">
    <property type="entry name" value="Fibrillin 2"/>
    <property type="match status" value="2"/>
</dbReference>
<dbReference type="FunFam" id="2.10.25.10:FF:000058">
    <property type="entry name" value="Fibrillin 2"/>
    <property type="match status" value="1"/>
</dbReference>
<dbReference type="FunFam" id="2.10.25.10:FF:000071">
    <property type="entry name" value="Fibrillin 2"/>
    <property type="match status" value="1"/>
</dbReference>
<dbReference type="FunFam" id="2.10.25.10:FF:000086">
    <property type="entry name" value="Fibrillin 2"/>
    <property type="match status" value="1"/>
</dbReference>
<dbReference type="FunFam" id="2.10.25.10:FF:000087">
    <property type="entry name" value="Fibrillin 2"/>
    <property type="match status" value="1"/>
</dbReference>
<dbReference type="FunFam" id="2.10.25.10:FF:000097">
    <property type="entry name" value="Fibrillin 2"/>
    <property type="match status" value="1"/>
</dbReference>
<dbReference type="FunFam" id="2.10.25.10:FF:000107">
    <property type="entry name" value="Fibrillin 2"/>
    <property type="match status" value="1"/>
</dbReference>
<dbReference type="FunFam" id="2.10.25.10:FF:000131">
    <property type="entry name" value="Fibrillin 2"/>
    <property type="match status" value="1"/>
</dbReference>
<dbReference type="FunFam" id="2.10.25.10:FF:000141">
    <property type="entry name" value="Fibrillin 2"/>
    <property type="match status" value="1"/>
</dbReference>
<dbReference type="FunFam" id="2.10.25.10:FF:000159">
    <property type="entry name" value="Fibrillin 2"/>
    <property type="match status" value="1"/>
</dbReference>
<dbReference type="FunFam" id="2.10.25.10:FF:000196">
    <property type="entry name" value="Fibrillin 2"/>
    <property type="match status" value="1"/>
</dbReference>
<dbReference type="FunFam" id="2.10.25.10:FF:000223">
    <property type="entry name" value="Fibrillin 2"/>
    <property type="match status" value="1"/>
</dbReference>
<dbReference type="FunFam" id="3.90.290.10:FF:000005">
    <property type="entry name" value="Fibrillin 2"/>
    <property type="match status" value="1"/>
</dbReference>
<dbReference type="FunFam" id="3.90.290.10:FF:000006">
    <property type="entry name" value="Fibrillin 2"/>
    <property type="match status" value="1"/>
</dbReference>
<dbReference type="FunFam" id="3.90.290.10:FF:000007">
    <property type="entry name" value="Fibrillin 2"/>
    <property type="match status" value="1"/>
</dbReference>
<dbReference type="FunFam" id="3.90.290.10:FF:000009">
    <property type="entry name" value="Fibrillin 2"/>
    <property type="match status" value="1"/>
</dbReference>
<dbReference type="FunFam" id="3.90.290.10:FF:000010">
    <property type="entry name" value="Fibrillin 2"/>
    <property type="match status" value="1"/>
</dbReference>
<dbReference type="FunFam" id="3.90.290.10:FF:000011">
    <property type="entry name" value="Fibrillin 2"/>
    <property type="match status" value="1"/>
</dbReference>
<dbReference type="FunFam" id="2.10.25.10:FF:000133">
    <property type="entry name" value="Fibrillin 3"/>
    <property type="match status" value="1"/>
</dbReference>
<dbReference type="FunFam" id="3.90.290.10:FF:000003">
    <property type="entry name" value="Fibrillin 3"/>
    <property type="match status" value="1"/>
</dbReference>
<dbReference type="FunFam" id="3.90.290.10:FF:000008">
    <property type="entry name" value="Fibrillin 3"/>
    <property type="match status" value="1"/>
</dbReference>
<dbReference type="FunFam" id="3.90.290.10:FF:000020">
    <property type="entry name" value="Fibrillin-1"/>
    <property type="match status" value="1"/>
</dbReference>
<dbReference type="FunFam" id="2.10.25.10:FF:000003">
    <property type="entry name" value="fibrillin-1 isoform X1"/>
    <property type="match status" value="14"/>
</dbReference>
<dbReference type="FunFam" id="2.10.25.10:FF:000002">
    <property type="entry name" value="Latent-transforming growth factor beta-binding protein 3"/>
    <property type="match status" value="1"/>
</dbReference>
<dbReference type="FunFam" id="2.10.25.10:FF:000014">
    <property type="entry name" value="Latent-transforming growth factor beta-binding protein 3"/>
    <property type="match status" value="2"/>
</dbReference>
<dbReference type="FunFam" id="2.10.25.10:FF:000620">
    <property type="entry name" value="Mutant fibrillin-1"/>
    <property type="match status" value="1"/>
</dbReference>
<dbReference type="FunFam" id="2.10.25.10:FF:000010">
    <property type="entry name" value="Pro-epidermal growth factor"/>
    <property type="match status" value="2"/>
</dbReference>
<dbReference type="FunFam" id="2.10.25.10:FF:000096">
    <property type="entry name" value="Putative fibrillin 2"/>
    <property type="match status" value="1"/>
</dbReference>
<dbReference type="FunFam" id="2.10.25.10:FF:000024">
    <property type="entry name" value="Putative latent-transforming growth factor beta-binding protein 2"/>
    <property type="match status" value="1"/>
</dbReference>
<dbReference type="FunFam" id="2.10.25.10:FF:000008">
    <property type="entry name" value="Signal peptide, CUB domain, EGF-like 2"/>
    <property type="match status" value="1"/>
</dbReference>
<dbReference type="Gene3D" id="2.10.25.10">
    <property type="entry name" value="Laminin"/>
    <property type="match status" value="46"/>
</dbReference>
<dbReference type="Gene3D" id="3.90.290.10">
    <property type="entry name" value="TGF-beta binding (TB) domain"/>
    <property type="match status" value="9"/>
</dbReference>
<dbReference type="InterPro" id="IPR026823">
    <property type="entry name" value="cEGF"/>
</dbReference>
<dbReference type="InterPro" id="IPR001881">
    <property type="entry name" value="EGF-like_Ca-bd_dom"/>
</dbReference>
<dbReference type="InterPro" id="IPR013032">
    <property type="entry name" value="EGF-like_CS"/>
</dbReference>
<dbReference type="InterPro" id="IPR000742">
    <property type="entry name" value="EGF-like_dom"/>
</dbReference>
<dbReference type="InterPro" id="IPR000152">
    <property type="entry name" value="EGF-type_Asp/Asn_hydroxyl_site"/>
</dbReference>
<dbReference type="InterPro" id="IPR018097">
    <property type="entry name" value="EGF_Ca-bd_CS"/>
</dbReference>
<dbReference type="InterPro" id="IPR024731">
    <property type="entry name" value="EGF_dom"/>
</dbReference>
<dbReference type="InterPro" id="IPR049388">
    <property type="entry name" value="FBN_EGF_N"/>
</dbReference>
<dbReference type="InterPro" id="IPR040872">
    <property type="entry name" value="Fibrillin_U_N"/>
</dbReference>
<dbReference type="InterPro" id="IPR009030">
    <property type="entry name" value="Growth_fac_rcpt_cys_sf"/>
</dbReference>
<dbReference type="InterPro" id="IPR049883">
    <property type="entry name" value="NOTCH1_EGF-like"/>
</dbReference>
<dbReference type="InterPro" id="IPR017878">
    <property type="entry name" value="TB_dom"/>
</dbReference>
<dbReference type="InterPro" id="IPR036773">
    <property type="entry name" value="TB_dom_sf"/>
</dbReference>
<dbReference type="InterPro" id="IPR052080">
    <property type="entry name" value="vWF_C/EGF_Fibrillin"/>
</dbReference>
<dbReference type="PANTHER" id="PTHR47333:SF5">
    <property type="entry name" value="FIBRILLIN-3"/>
    <property type="match status" value="1"/>
</dbReference>
<dbReference type="PANTHER" id="PTHR47333">
    <property type="entry name" value="VON WILLEBRAND FACTOR C AND EGF DOMAIN-CONTAINING PROTEIN"/>
    <property type="match status" value="1"/>
</dbReference>
<dbReference type="Pfam" id="PF12662">
    <property type="entry name" value="cEGF"/>
    <property type="match status" value="4"/>
</dbReference>
<dbReference type="Pfam" id="PF12947">
    <property type="entry name" value="EGF_3"/>
    <property type="match status" value="1"/>
</dbReference>
<dbReference type="Pfam" id="PF07645">
    <property type="entry name" value="EGF_CA"/>
    <property type="match status" value="34"/>
</dbReference>
<dbReference type="Pfam" id="PF21364">
    <property type="entry name" value="EGF_FBN_1st"/>
    <property type="match status" value="1"/>
</dbReference>
<dbReference type="Pfam" id="PF18193">
    <property type="entry name" value="Fibrillin_U_N"/>
    <property type="match status" value="1"/>
</dbReference>
<dbReference type="Pfam" id="PF14670">
    <property type="entry name" value="FXa_inhibition"/>
    <property type="match status" value="1"/>
</dbReference>
<dbReference type="Pfam" id="PF12661">
    <property type="entry name" value="hEGF"/>
    <property type="match status" value="1"/>
</dbReference>
<dbReference type="Pfam" id="PF00683">
    <property type="entry name" value="TB"/>
    <property type="match status" value="9"/>
</dbReference>
<dbReference type="PIRSF" id="PIRSF036312">
    <property type="entry name" value="Fibrillin"/>
    <property type="match status" value="1"/>
</dbReference>
<dbReference type="SMART" id="SM00181">
    <property type="entry name" value="EGF"/>
    <property type="match status" value="47"/>
</dbReference>
<dbReference type="SMART" id="SM00179">
    <property type="entry name" value="EGF_CA"/>
    <property type="match status" value="44"/>
</dbReference>
<dbReference type="SUPFAM" id="SSF57196">
    <property type="entry name" value="EGF/Laminin"/>
    <property type="match status" value="14"/>
</dbReference>
<dbReference type="SUPFAM" id="SSF57184">
    <property type="entry name" value="Growth factor receptor domain"/>
    <property type="match status" value="10"/>
</dbReference>
<dbReference type="SUPFAM" id="SSF57581">
    <property type="entry name" value="TB module/8-cys domain"/>
    <property type="match status" value="9"/>
</dbReference>
<dbReference type="PROSITE" id="PS00010">
    <property type="entry name" value="ASX_HYDROXYL"/>
    <property type="match status" value="43"/>
</dbReference>
<dbReference type="PROSITE" id="PS00022">
    <property type="entry name" value="EGF_1"/>
    <property type="match status" value="2"/>
</dbReference>
<dbReference type="PROSITE" id="PS01186">
    <property type="entry name" value="EGF_2"/>
    <property type="match status" value="38"/>
</dbReference>
<dbReference type="PROSITE" id="PS50026">
    <property type="entry name" value="EGF_3"/>
    <property type="match status" value="45"/>
</dbReference>
<dbReference type="PROSITE" id="PS01187">
    <property type="entry name" value="EGF_CA"/>
    <property type="match status" value="43"/>
</dbReference>
<dbReference type="PROSITE" id="PS51364">
    <property type="entry name" value="TB"/>
    <property type="match status" value="9"/>
</dbReference>
<name>FBN1_BOVIN</name>
<reference key="1">
    <citation type="journal article" date="1994" name="Genomics">
        <title>Sequence of the coding region of the bovine fibrillin cDNA and localization to bovine chromosome 10.</title>
        <authorList>
            <person name="Tilstra D.J."/>
            <person name="Potter K.A."/>
            <person name="Byers P.H."/>
        </authorList>
    </citation>
    <scope>NUCLEOTIDE SEQUENCE [MRNA]</scope>
    <source>
        <tissue>Skin</tissue>
    </source>
</reference>
<reference key="2">
    <citation type="journal article" date="2009" name="Genome Biol.">
        <title>A whole-genome assembly of the domestic cow, Bos taurus.</title>
        <authorList>
            <person name="Zimin A.V."/>
            <person name="Delcher A.L."/>
            <person name="Florea L."/>
            <person name="Kelley D.R."/>
            <person name="Schatz M.C."/>
            <person name="Puiu D."/>
            <person name="Hanrahan F."/>
            <person name="Pertea G."/>
            <person name="Van Tassell C.P."/>
            <person name="Sonstegard T.S."/>
            <person name="Marcais G."/>
            <person name="Roberts M."/>
            <person name="Subramanian P."/>
            <person name="Yorke J.A."/>
            <person name="Salzberg S.L."/>
        </authorList>
    </citation>
    <scope>NUCLEOTIDE SEQUENCE [LARGE SCALE GENOMIC DNA]</scope>
    <source>
        <strain>Hereford</strain>
    </source>
</reference>
<reference key="3">
    <citation type="journal article" date="1996" name="J. Biol. Chem.">
        <title>Further characterization of proteins associated with elastic fiber microfibrils including the molecular cloning of MAGP-2 (MP25).</title>
        <authorList>
            <person name="Gibson M.A."/>
            <person name="Hatzinikolas G."/>
            <person name="Kumaratilake J.S."/>
            <person name="Sandberg L.B."/>
            <person name="Nicholl J.K."/>
            <person name="Sutherland G.R."/>
            <person name="Cleary E.G."/>
        </authorList>
    </citation>
    <scope>PARTIAL PROTEIN SEQUENCE</scope>
</reference>
<reference key="4">
    <citation type="journal article" date="2012" name="Invest. Ophthalmol. Vis. Sci.">
        <title>ADAMTSL4, a secreted glycoprotein widely distributed in the eye, binds Fibrillin-1 microfibrils and accelerates microfibril biogenesis.</title>
        <authorList>
            <person name="Gabriel L.A."/>
            <person name="Wang L.W."/>
            <person name="Bader H."/>
            <person name="Ho J.C."/>
            <person name="Majors A.K."/>
            <person name="Hollyfield J.G."/>
            <person name="Traboulsi E.I."/>
            <person name="Apte S.S."/>
        </authorList>
    </citation>
    <scope>SUBCELLULAR LOCATION</scope>
</reference>
<accession>P98133</accession>
<accession>F1N4K8</accession>
<sequence>MRRGGLLEVALGFTVLLASYTSHGADTNLEAGNVKETRANRAKRRGGGGHDALKGPNVCGSRYNAYCCPGWKTLPGGNQCIVPICRHSCGDGFCSRPNMCTCPSGQIAPSCGSRSIQHCNIRCMNGGSCSDDHCLCQKGYIGTHCGQPVCESGCLNGGRCVAPNRCACTYGFTGPQCERDYRTGPCFTVISNQMCQGQLSGIVCTKTLCCATVGRAWGHPCEMCPAQPHPCRRGFIPNIRTGACQDVDECQAIPGLCQGGNCINTVGSFECKCPAGHKFNEVSQKCEDIDECSTIPGICDGGECTNTVSSYFCKCPPGFYTSPDGTRCIDVRPGYCYTALANGRCSNQLPQSITKMQCCCDVGRCWSPGVTVAPEMCPIRATEDFNKLCSVPMVIPERPGYPPPPLGPVPPVQPVPPGFPPGPQIMIPRPPVEYPYPSREPPRVLPVNVTDYCQLFRYLCQNGRCIPTPGSYRCECNKGFQLDLRGECIDVDECEKNPCAGGECINTQGSYTCQCRPGYQSTLTRTECRDIDECLQNGRICNNGRCINTDGSFHCVCNAGFHVTRDGKNCEDMDECSIRNMCLNGMCINEDGSFKCICKPGFQLASDGRYCKDINECETPGICMNGRCVNTDGSYRCECFPGLAVGLDGRVCVDTHMRSTCYGGYKRGQCVKPLFGAVTKSECCCASTEYAFGEPCQPCPSQNSAEYQALCSSGPGITSAGSDINECALDPDICPNGICENLRGTYKCICNSGYEVDSTGKNCVDINECVLNSLLCDNGQCRNTPGSFVCTCPKGFIYKPELKTCEDIDECESSPCINGVCKNSPGSFICECSSESTLDPTKTICIETIKGTCWQTVIDGRCEININGATLKSQCCSSLGAAWGSPCTPCQVDPICGKGYSRIKGTQCEDIDECEVFPGVCKNGLCVNSKGSFKCQCPSGMTLDATGRICLDIRLETCFLRYEDEECTLPVAGRHRMDACCCSVGAAWGTEECEECPVRNTPEYEELCPRGPGFATKEITNGKRFFKDINECKMIPNLCTHGKCRNTIGSFKCRCDSGFALDSEERNCTDIDECRISPDLCGRGQCVNTPGDFECKCDEGYESGFMMMKNCMDIDECQRDPLLCRGGVCLNTEGSYRCECPPGHQLAPNISACIDINECELSAHLCPHGRCVNLIGKYQCACNPGYHSTPDRLFCVDIDECSIMNGGCETFCTNSEGSYECSCQPGFALMPDQRSCTDIDECEDNPNICDGGQCTNIPGEYRCLCYDGFMASEDMKTCVDVNECDLNPNICLSGTCENTKGSFICHCDMGYSGKKGKTGCTDINECEIGAHNCDRHAVCTNTAGSFKCSCSPGWIGDGIKCTDLDECSNGTHMCSQHADCKNTMGSYRCLCKEGYTGDGFTCTDLDECSENLNLCGNGQCLNAPGGYRCECDMGFVPSADGKACEDIDECSLPNICVFGTCHNLPGLFRCECEIGYELDRSGGNCTDVNECLDPTTCISGNCVNTPGSYTCDCPPDFELNPTRVGCVDTRSGNCYLDIRPRGDNGDTACSNEIGVGVSKASCCCSLGKAWGTPCELCPPVNTSEYKILCPGGEGFRPNPITVILEDIDECQELPGLCQGGKCINTFGSFQCRCPTGYYLNEDTRVCDDVNECETPGICGPGTCYNTVGNYTCICPPDYMQVNGGNNCMDMRRSLCYRNYYADNQTCDGELLFNMTKKMCCCSYNIGRAWNKPCEQCPIPSTDEFATLCGSQRPGFVIDIYTGLPVDIDECREIPGVCENGVCINMVGSFRCECPVGFFYNDKLLVCEDIDECQNGPVCQRNAECINTAGSYRCDCKPGYRFTSTGQCNDRNECQEIPNICSHGQCIDTVGSFYCLCHTGFKTNADQTMCLDINECERDACGNGTCRNTIGSFNCRCNHGFILSHNNDCIDVDECATGNGNLCRNGQCINTVGSFQCQCNEGYEVAPDGRTCVDINECLLDPRKCAPGTCQNLDGSYRCICPPGYSLQNDKCEDIDECVEEPEICALGTCSNTEGSFKCLCPDGFSLSSTGRRCQDLRMSYCYAKFEGGKCSSPKSRNHSKQECCCALKGEGWGDPCELCPTEPDEAFRQICPYGSGIIVGPDDSAVDMDECKEPDVCKHGQCINTDGSYRCECPFGYILQGNECVDTDECSVGNPCGNGTCKNVIGGFECTCEEGFEPGPMMTCEDINECAQNPLLCAFRCVNTYGSYECKCPAGYVLREDRRMCKDEDECEEGKHDCAEKQMECKNLIGTYLCICGPGYQRRPDGEGCVDENECQTKPGICENGRCLNTRGSYTCECNDGFTASPNQDECLDNREGYCFTEVLQNMCQIGSSNRNPVTKSECCCDGGRGWGPHCEICPFQGTVAFKKLCPHGRGFMTNGADIDECKVIHDVCRNGECVNDRGSYHCICKTGYTPDITGTACVDLNECNQAPKPCNFICKNTEGSYQCSCPKGYILQEDGRSCKDLDECATKQHNCQFLCVNTIGSFTCKCPPGFTQHHTACIDNNECTSDINLCGSKGICQNTPGSFTCECQRGFSLDPSGASCEDVDECEGNHRCQHGCQNIIGGYRCSCPQGYLQHYQWNQCVDENECLSAHICGGASCHNTLGSYKCMCPAGFQYEQFSGGCQDINECGSAQAPCSYGCSNTEGGYLCACPPGYFRIGQGHCVSGMGMGRGNPEPPASGEMDDNSLSPEACYECKINGYPKRGRKRRSANETDASNIEDQPEIEANVSLASWDVEKTAVFAFNISHISNKVRILELLPALTTLTNHNRYLIESGNENGFFKINQKEGISYLHFTKKKPVAGTYSLQISSTPLYKKKELNQLEDKYDKDYLSGELGDNLKMKIQILLH</sequence>